<gene>
    <name type="primary">SNX41</name>
    <name type="ordered locus">YDR425W</name>
</gene>
<feature type="chain" id="PRO_0000213834" description="Sorting nexin-41">
    <location>
        <begin position="1"/>
        <end position="625"/>
    </location>
</feature>
<feature type="domain" description="PX" evidence="3">
    <location>
        <begin position="98"/>
        <end position="235"/>
    </location>
</feature>
<feature type="region of interest" description="Disordered" evidence="4">
    <location>
        <begin position="1"/>
        <end position="90"/>
    </location>
</feature>
<feature type="coiled-coil region" evidence="2">
    <location>
        <begin position="437"/>
        <end position="469"/>
    </location>
</feature>
<feature type="coiled-coil region" evidence="2">
    <location>
        <begin position="539"/>
        <end position="563"/>
    </location>
</feature>
<feature type="compositionally biased region" description="Low complexity" evidence="4">
    <location>
        <begin position="54"/>
        <end position="86"/>
    </location>
</feature>
<feature type="binding site" evidence="1">
    <location>
        <position position="153"/>
    </location>
    <ligand>
        <name>a 1,2-diacyl-sn-glycero-3-phospho-(1D-myo-inositol-3-phosphate)</name>
        <dbReference type="ChEBI" id="CHEBI:58088"/>
    </ligand>
</feature>
<feature type="binding site" evidence="1">
    <location>
        <position position="155"/>
    </location>
    <ligand>
        <name>a 1,2-diacyl-sn-glycero-3-phospho-(1D-myo-inositol-3-phosphate)</name>
        <dbReference type="ChEBI" id="CHEBI:58088"/>
    </ligand>
</feature>
<feature type="binding site" evidence="1">
    <location>
        <position position="179"/>
    </location>
    <ligand>
        <name>a 1,2-diacyl-sn-glycero-3-phospho-(1D-myo-inositol-3-phosphate)</name>
        <dbReference type="ChEBI" id="CHEBI:58088"/>
    </ligand>
</feature>
<feature type="binding site" evidence="1">
    <location>
        <position position="202"/>
    </location>
    <ligand>
        <name>a 1,2-diacyl-sn-glycero-3-phospho-(1D-myo-inositol-3-phosphate)</name>
        <dbReference type="ChEBI" id="CHEBI:58088"/>
    </ligand>
</feature>
<protein>
    <recommendedName>
        <fullName>Sorting nexin-41</fullName>
    </recommendedName>
</protein>
<accession>Q04053</accession>
<accession>D6VT55</accession>
<proteinExistence type="evidence at protein level"/>
<name>SNX41_YEAST</name>
<keyword id="KW-0175">Coiled coil</keyword>
<keyword id="KW-0967">Endosome</keyword>
<keyword id="KW-0446">Lipid-binding</keyword>
<keyword id="KW-0472">Membrane</keyword>
<keyword id="KW-0653">Protein transport</keyword>
<keyword id="KW-1185">Reference proteome</keyword>
<keyword id="KW-0813">Transport</keyword>
<sequence length="625" mass="70741">MDYNIFEAVHEQQSSTSDMDLSEEDNNPFVGTHHLYASGIGTTIGEARPENENSPPSSSSLPSSPAHSSSAGSSRASTSSSTSSHAVVEADAETEPFVSLSMSTTATISKFTPHDMNGTQQIQIIDAGDFKDPWGKHAIGYVILYENNKIIRRYSEFHSLRQSLTRLLPTIIIPPIPSKHSLLKYIWSPINAANDSKIISTRKKMLNSFLSNCLNIQEISNDIVFQKFLNPEFNWKDVLSSSPIIILPLNNLLAPPLSPTKPSPLHSILPIPSNSSLRNYNSIWQQHITVKSHNEISNLPTEILQNESQFTHIENLFQNYKRIITHLLKNIRSNKSHFHSLSTYFAELGAYYNAFSLENDITMPNSLRESENNSNNPMMEIISHIEKTGHSFDVIYISSEILIEKYTSILEDPINELLQFLNESFKVLNFKKLKFLQFKILERLIIEKETKLSSLTEIENQLQKINESLTRSTILTDENYKDTKAADLTFVKKDVRSLSKSSSNSSSSGHQNEIHIGASKLNYKTSTPTMNLNKLEIKQLTEQERSKQIKQLNQDLSKLKDCLSICISDMLEINNSSYNSLMHTYNHINLTIGKILKLFAASFKAWIKECLKNWKLAKLQIDEAL</sequence>
<organism>
    <name type="scientific">Saccharomyces cerevisiae (strain ATCC 204508 / S288c)</name>
    <name type="common">Baker's yeast</name>
    <dbReference type="NCBI Taxonomy" id="559292"/>
    <lineage>
        <taxon>Eukaryota</taxon>
        <taxon>Fungi</taxon>
        <taxon>Dikarya</taxon>
        <taxon>Ascomycota</taxon>
        <taxon>Saccharomycotina</taxon>
        <taxon>Saccharomycetes</taxon>
        <taxon>Saccharomycetales</taxon>
        <taxon>Saccharomycetaceae</taxon>
        <taxon>Saccharomyces</taxon>
    </lineage>
</organism>
<reference key="1">
    <citation type="journal article" date="1997" name="Nature">
        <title>The nucleotide sequence of Saccharomyces cerevisiae chromosome IV.</title>
        <authorList>
            <person name="Jacq C."/>
            <person name="Alt-Moerbe J."/>
            <person name="Andre B."/>
            <person name="Arnold W."/>
            <person name="Bahr A."/>
            <person name="Ballesta J.P.G."/>
            <person name="Bargues M."/>
            <person name="Baron L."/>
            <person name="Becker A."/>
            <person name="Biteau N."/>
            <person name="Bloecker H."/>
            <person name="Blugeon C."/>
            <person name="Boskovic J."/>
            <person name="Brandt P."/>
            <person name="Brueckner M."/>
            <person name="Buitrago M.J."/>
            <person name="Coster F."/>
            <person name="Delaveau T."/>
            <person name="del Rey F."/>
            <person name="Dujon B."/>
            <person name="Eide L.G."/>
            <person name="Garcia-Cantalejo J.M."/>
            <person name="Goffeau A."/>
            <person name="Gomez-Peris A."/>
            <person name="Granotier C."/>
            <person name="Hanemann V."/>
            <person name="Hankeln T."/>
            <person name="Hoheisel J.D."/>
            <person name="Jaeger W."/>
            <person name="Jimenez A."/>
            <person name="Jonniaux J.-L."/>
            <person name="Kraemer C."/>
            <person name="Kuester H."/>
            <person name="Laamanen P."/>
            <person name="Legros Y."/>
            <person name="Louis E.J."/>
            <person name="Moeller-Rieker S."/>
            <person name="Monnet A."/>
            <person name="Moro M."/>
            <person name="Mueller-Auer S."/>
            <person name="Nussbaumer B."/>
            <person name="Paricio N."/>
            <person name="Paulin L."/>
            <person name="Perea J."/>
            <person name="Perez-Alonso M."/>
            <person name="Perez-Ortin J.E."/>
            <person name="Pohl T.M."/>
            <person name="Prydz H."/>
            <person name="Purnelle B."/>
            <person name="Rasmussen S.W."/>
            <person name="Remacha M.A."/>
            <person name="Revuelta J.L."/>
            <person name="Rieger M."/>
            <person name="Salom D."/>
            <person name="Saluz H.P."/>
            <person name="Saiz J.E."/>
            <person name="Saren A.-M."/>
            <person name="Schaefer M."/>
            <person name="Scharfe M."/>
            <person name="Schmidt E.R."/>
            <person name="Schneider C."/>
            <person name="Scholler P."/>
            <person name="Schwarz S."/>
            <person name="Soler-Mira A."/>
            <person name="Urrestarazu L.A."/>
            <person name="Verhasselt P."/>
            <person name="Vissers S."/>
            <person name="Voet M."/>
            <person name="Volckaert G."/>
            <person name="Wagner G."/>
            <person name="Wambutt R."/>
            <person name="Wedler E."/>
            <person name="Wedler H."/>
            <person name="Woelfl S."/>
            <person name="Harris D.E."/>
            <person name="Bowman S."/>
            <person name="Brown D."/>
            <person name="Churcher C.M."/>
            <person name="Connor R."/>
            <person name="Dedman K."/>
            <person name="Gentles S."/>
            <person name="Hamlin N."/>
            <person name="Hunt S."/>
            <person name="Jones L."/>
            <person name="McDonald S."/>
            <person name="Murphy L.D."/>
            <person name="Niblett D."/>
            <person name="Odell C."/>
            <person name="Oliver K."/>
            <person name="Rajandream M.A."/>
            <person name="Richards C."/>
            <person name="Shore L."/>
            <person name="Walsh S.V."/>
            <person name="Barrell B.G."/>
            <person name="Dietrich F.S."/>
            <person name="Mulligan J.T."/>
            <person name="Allen E."/>
            <person name="Araujo R."/>
            <person name="Aviles E."/>
            <person name="Berno A."/>
            <person name="Carpenter J."/>
            <person name="Chen E."/>
            <person name="Cherry J.M."/>
            <person name="Chung E."/>
            <person name="Duncan M."/>
            <person name="Hunicke-Smith S."/>
            <person name="Hyman R.W."/>
            <person name="Komp C."/>
            <person name="Lashkari D."/>
            <person name="Lew H."/>
            <person name="Lin D."/>
            <person name="Mosedale D."/>
            <person name="Nakahara K."/>
            <person name="Namath A."/>
            <person name="Oefner P."/>
            <person name="Oh C."/>
            <person name="Petel F.X."/>
            <person name="Roberts D."/>
            <person name="Schramm S."/>
            <person name="Schroeder M."/>
            <person name="Shogren T."/>
            <person name="Shroff N."/>
            <person name="Winant A."/>
            <person name="Yelton M.A."/>
            <person name="Botstein D."/>
            <person name="Davis R.W."/>
            <person name="Johnston M."/>
            <person name="Andrews S."/>
            <person name="Brinkman R."/>
            <person name="Cooper J."/>
            <person name="Ding H."/>
            <person name="Du Z."/>
            <person name="Favello A."/>
            <person name="Fulton L."/>
            <person name="Gattung S."/>
            <person name="Greco T."/>
            <person name="Hallsworth K."/>
            <person name="Hawkins J."/>
            <person name="Hillier L.W."/>
            <person name="Jier M."/>
            <person name="Johnson D."/>
            <person name="Johnston L."/>
            <person name="Kirsten J."/>
            <person name="Kucaba T."/>
            <person name="Langston Y."/>
            <person name="Latreille P."/>
            <person name="Le T."/>
            <person name="Mardis E."/>
            <person name="Menezes S."/>
            <person name="Miller N."/>
            <person name="Nhan M."/>
            <person name="Pauley A."/>
            <person name="Peluso D."/>
            <person name="Rifkin L."/>
            <person name="Riles L."/>
            <person name="Taich A."/>
            <person name="Trevaskis E."/>
            <person name="Vignati D."/>
            <person name="Wilcox L."/>
            <person name="Wohldman P."/>
            <person name="Vaudin M."/>
            <person name="Wilson R."/>
            <person name="Waterston R."/>
            <person name="Albermann K."/>
            <person name="Hani J."/>
            <person name="Heumann K."/>
            <person name="Kleine K."/>
            <person name="Mewes H.-W."/>
            <person name="Zollner A."/>
            <person name="Zaccaria P."/>
        </authorList>
    </citation>
    <scope>NUCLEOTIDE SEQUENCE [LARGE SCALE GENOMIC DNA]</scope>
    <source>
        <strain>ATCC 204508 / S288c</strain>
    </source>
</reference>
<reference key="2">
    <citation type="journal article" date="2014" name="G3 (Bethesda)">
        <title>The reference genome sequence of Saccharomyces cerevisiae: Then and now.</title>
        <authorList>
            <person name="Engel S.R."/>
            <person name="Dietrich F.S."/>
            <person name="Fisk D.G."/>
            <person name="Binkley G."/>
            <person name="Balakrishnan R."/>
            <person name="Costanzo M.C."/>
            <person name="Dwight S.S."/>
            <person name="Hitz B.C."/>
            <person name="Karra K."/>
            <person name="Nash R.S."/>
            <person name="Weng S."/>
            <person name="Wong E.D."/>
            <person name="Lloyd P."/>
            <person name="Skrzypek M.S."/>
            <person name="Miyasato S.R."/>
            <person name="Simison M."/>
            <person name="Cherry J.M."/>
        </authorList>
    </citation>
    <scope>GENOME REANNOTATION</scope>
    <source>
        <strain>ATCC 204508 / S288c</strain>
    </source>
</reference>
<reference key="3">
    <citation type="journal article" date="2003" name="EMBO J.">
        <title>Retromer and the sorting nexins Snx4/41/42 mediate distinct retrieval pathways from yeast endosomes.</title>
        <authorList>
            <person name="Hettema E.H."/>
            <person name="Lewis M.J."/>
            <person name="Black M.W."/>
            <person name="Pelham H.R.B."/>
        </authorList>
    </citation>
    <scope>FUNCTION</scope>
    <scope>INTERACTION WITH SNX4</scope>
</reference>
<reference key="4">
    <citation type="journal article" date="2003" name="Nature">
        <title>Global analysis of protein localization in budding yeast.</title>
        <authorList>
            <person name="Huh W.-K."/>
            <person name="Falvo J.V."/>
            <person name="Gerke L.C."/>
            <person name="Carroll A.S."/>
            <person name="Howson R.W."/>
            <person name="Weissman J.S."/>
            <person name="O'Shea E.K."/>
        </authorList>
    </citation>
    <scope>SUBCELLULAR LOCATION [LARGE SCALE ANALYSIS]</scope>
</reference>
<reference key="5">
    <citation type="journal article" date="2003" name="Nature">
        <title>Global analysis of protein expression in yeast.</title>
        <authorList>
            <person name="Ghaemmaghami S."/>
            <person name="Huh W.-K."/>
            <person name="Bower K."/>
            <person name="Howson R.W."/>
            <person name="Belle A."/>
            <person name="Dephoure N."/>
            <person name="O'Shea E.K."/>
            <person name="Weissman J.S."/>
        </authorList>
    </citation>
    <scope>LEVEL OF PROTEIN EXPRESSION [LARGE SCALE ANALYSIS]</scope>
</reference>
<dbReference type="EMBL" id="U33007">
    <property type="protein sequence ID" value="AAB64858.1"/>
    <property type="molecule type" value="Genomic_DNA"/>
</dbReference>
<dbReference type="EMBL" id="BK006938">
    <property type="protein sequence ID" value="DAA12265.1"/>
    <property type="molecule type" value="Genomic_DNA"/>
</dbReference>
<dbReference type="PIR" id="S69707">
    <property type="entry name" value="S69707"/>
</dbReference>
<dbReference type="RefSeq" id="NP_010713.1">
    <property type="nucleotide sequence ID" value="NM_001180733.1"/>
</dbReference>
<dbReference type="BioGRID" id="32484">
    <property type="interactions" value="129"/>
</dbReference>
<dbReference type="ComplexPortal" id="CPX-1378">
    <property type="entry name" value="SNX4-SNX41 sorting nexin complex"/>
</dbReference>
<dbReference type="DIP" id="DIP-3920N"/>
<dbReference type="FunCoup" id="Q04053">
    <property type="interactions" value="157"/>
</dbReference>
<dbReference type="IntAct" id="Q04053">
    <property type="interactions" value="17"/>
</dbReference>
<dbReference type="MINT" id="Q04053"/>
<dbReference type="STRING" id="4932.YDR425W"/>
<dbReference type="iPTMnet" id="Q04053"/>
<dbReference type="PaxDb" id="4932-YDR425W"/>
<dbReference type="PeptideAtlas" id="Q04053"/>
<dbReference type="EnsemblFungi" id="YDR425W_mRNA">
    <property type="protein sequence ID" value="YDR425W"/>
    <property type="gene ID" value="YDR425W"/>
</dbReference>
<dbReference type="GeneID" id="852035"/>
<dbReference type="KEGG" id="sce:YDR425W"/>
<dbReference type="AGR" id="SGD:S000002833"/>
<dbReference type="SGD" id="S000002833">
    <property type="gene designation" value="SNX41"/>
</dbReference>
<dbReference type="VEuPathDB" id="FungiDB:YDR425W"/>
<dbReference type="eggNOG" id="KOG2273">
    <property type="taxonomic scope" value="Eukaryota"/>
</dbReference>
<dbReference type="HOGENOM" id="CLU_014456_3_0_1"/>
<dbReference type="InParanoid" id="Q04053"/>
<dbReference type="OMA" id="DFKDPWG"/>
<dbReference type="OrthoDB" id="289314at2759"/>
<dbReference type="BioCyc" id="YEAST:G3O-29966-MONOMER"/>
<dbReference type="BioGRID-ORCS" id="852035">
    <property type="hits" value="0 hits in 10 CRISPR screens"/>
</dbReference>
<dbReference type="PRO" id="PR:Q04053"/>
<dbReference type="Proteomes" id="UP000002311">
    <property type="component" value="Chromosome IV"/>
</dbReference>
<dbReference type="RNAct" id="Q04053">
    <property type="molecule type" value="protein"/>
</dbReference>
<dbReference type="GO" id="GO:0010009">
    <property type="term" value="C:cytoplasmic side of endosome membrane"/>
    <property type="evidence" value="ECO:0000314"/>
    <property type="project" value="ComplexPortal"/>
</dbReference>
<dbReference type="GO" id="GO:0005829">
    <property type="term" value="C:cytosol"/>
    <property type="evidence" value="ECO:0007669"/>
    <property type="project" value="GOC"/>
</dbReference>
<dbReference type="GO" id="GO:0005768">
    <property type="term" value="C:endosome"/>
    <property type="evidence" value="ECO:0000314"/>
    <property type="project" value="SGD"/>
</dbReference>
<dbReference type="GO" id="GO:0000407">
    <property type="term" value="C:phagophore assembly site"/>
    <property type="evidence" value="ECO:0000318"/>
    <property type="project" value="GO_Central"/>
</dbReference>
<dbReference type="GO" id="GO:0035091">
    <property type="term" value="F:phosphatidylinositol binding"/>
    <property type="evidence" value="ECO:0000314"/>
    <property type="project" value="SGD"/>
</dbReference>
<dbReference type="GO" id="GO:0032266">
    <property type="term" value="F:phosphatidylinositol-3-phosphate binding"/>
    <property type="evidence" value="ECO:0000314"/>
    <property type="project" value="SGD"/>
</dbReference>
<dbReference type="GO" id="GO:0000422">
    <property type="term" value="P:autophagy of mitochondrion"/>
    <property type="evidence" value="ECO:0000318"/>
    <property type="project" value="GO_Central"/>
</dbReference>
<dbReference type="GO" id="GO:0006886">
    <property type="term" value="P:intracellular protein transport"/>
    <property type="evidence" value="ECO:0000314"/>
    <property type="project" value="ComplexPortal"/>
</dbReference>
<dbReference type="GO" id="GO:0016236">
    <property type="term" value="P:macroautophagy"/>
    <property type="evidence" value="ECO:0000314"/>
    <property type="project" value="ComplexPortal"/>
</dbReference>
<dbReference type="GO" id="GO:0061709">
    <property type="term" value="P:reticulophagy"/>
    <property type="evidence" value="ECO:0000318"/>
    <property type="project" value="GO_Central"/>
</dbReference>
<dbReference type="GO" id="GO:0042147">
    <property type="term" value="P:retrograde transport, endosome to Golgi"/>
    <property type="evidence" value="ECO:0000314"/>
    <property type="project" value="ComplexPortal"/>
</dbReference>
<dbReference type="CDD" id="cd06867">
    <property type="entry name" value="PX_SNX41_42"/>
    <property type="match status" value="1"/>
</dbReference>
<dbReference type="Gene3D" id="3.30.1520.10">
    <property type="entry name" value="Phox-like domain"/>
    <property type="match status" value="1"/>
</dbReference>
<dbReference type="InterPro" id="IPR001683">
    <property type="entry name" value="PX_dom"/>
</dbReference>
<dbReference type="InterPro" id="IPR036871">
    <property type="entry name" value="PX_dom_sf"/>
</dbReference>
<dbReference type="InterPro" id="IPR044106">
    <property type="entry name" value="PX_Snx41/Atg20"/>
</dbReference>
<dbReference type="InterPro" id="IPR051079">
    <property type="entry name" value="Sorting_Nexin_Autophagy"/>
</dbReference>
<dbReference type="PANTHER" id="PTHR46979">
    <property type="entry name" value="SORTING NEXIN-41"/>
    <property type="match status" value="1"/>
</dbReference>
<dbReference type="PANTHER" id="PTHR46979:SF2">
    <property type="entry name" value="SORTING NEXIN-41"/>
    <property type="match status" value="1"/>
</dbReference>
<dbReference type="Pfam" id="PF00787">
    <property type="entry name" value="PX"/>
    <property type="match status" value="1"/>
</dbReference>
<dbReference type="SMART" id="SM00312">
    <property type="entry name" value="PX"/>
    <property type="match status" value="1"/>
</dbReference>
<dbReference type="SUPFAM" id="SSF64268">
    <property type="entry name" value="PX domain"/>
    <property type="match status" value="1"/>
</dbReference>
<dbReference type="PROSITE" id="PS50195">
    <property type="entry name" value="PX"/>
    <property type="match status" value="1"/>
</dbReference>
<evidence type="ECO:0000250" key="1"/>
<evidence type="ECO:0000255" key="2"/>
<evidence type="ECO:0000255" key="3">
    <source>
        <dbReference type="PROSITE-ProRule" id="PRU00147"/>
    </source>
</evidence>
<evidence type="ECO:0000256" key="4">
    <source>
        <dbReference type="SAM" id="MobiDB-lite"/>
    </source>
</evidence>
<evidence type="ECO:0000269" key="5">
    <source>
    </source>
</evidence>
<evidence type="ECO:0000269" key="6">
    <source>
    </source>
</evidence>
<evidence type="ECO:0000269" key="7">
    <source>
    </source>
</evidence>
<evidence type="ECO:0000305" key="8"/>
<comment type="function">
    <text evidence="5">Involved in proper sorting of the v-SNARE protein SNC1.</text>
</comment>
<comment type="subunit">
    <text>Binds to SNX4.</text>
</comment>
<comment type="interaction">
    <interactant intactId="EBI-30464">
        <id>Q04053</id>
    </interactant>
    <interactant intactId="EBI-17610">
        <id>P47057</id>
        <label>SNX4</label>
    </interactant>
    <organismsDiffer>false</organismsDiffer>
    <experiments>8</experiments>
</comment>
<comment type="subcellular location">
    <subcellularLocation>
        <location evidence="6">Prevacuolar compartment</location>
    </subcellularLocation>
    <subcellularLocation>
        <location evidence="6">Endosome</location>
    </subcellularLocation>
    <subcellularLocation>
        <location evidence="6">Endosome membrane</location>
        <topology evidence="6">Peripheral membrane protein</topology>
        <orientation evidence="6">Cytoplasmic side</orientation>
    </subcellularLocation>
    <text>Perivacuolar punctate structures and endosome.</text>
</comment>
<comment type="domain">
    <text evidence="1">The PX domain binds to phosphatidylinositol 3-phosphate which is necessary for peripheral membrane localization to the punctate structures.</text>
</comment>
<comment type="miscellaneous">
    <text evidence="7">Present with 450 molecules/cell in log phase SD medium.</text>
</comment>
<comment type="similarity">
    <text evidence="8">Belongs to the sorting nexin family.</text>
</comment>